<sequence>MSDWNPSLYLHFSAERSRPAVELLARVPLENVEYVADLGCGPGNSTALLQQRWPAARITGIDSSPAMIAEARSALPDCQFVEADIRNWQPVQALDLIFANASLQWLPDHYELFPHLVSLLNPQGVLAVQMPDNWLEPTHVLMREVAWEQNYPDRGREPLAGVHAYYDILSEAGCEVDIWRTTYYHQMPSHQAIIDWVTATGLRPWLQDLTESEQQLFLKRYHQMLEEQYPLQENGQILLAFPRLFIVARRME</sequence>
<proteinExistence type="inferred from homology"/>
<protein>
    <recommendedName>
        <fullName evidence="1">Trans-aconitate 2-methyltransferase</fullName>
        <ecNumber evidence="1">2.1.1.144</ecNumber>
    </recommendedName>
</protein>
<accession>B1XEA7</accession>
<feature type="chain" id="PRO_1000129254" description="Trans-aconitate 2-methyltransferase">
    <location>
        <begin position="1"/>
        <end position="252"/>
    </location>
</feature>
<reference key="1">
    <citation type="journal article" date="2008" name="J. Bacteriol.">
        <title>The complete genome sequence of Escherichia coli DH10B: insights into the biology of a laboratory workhorse.</title>
        <authorList>
            <person name="Durfee T."/>
            <person name="Nelson R."/>
            <person name="Baldwin S."/>
            <person name="Plunkett G. III"/>
            <person name="Burland V."/>
            <person name="Mau B."/>
            <person name="Petrosino J.F."/>
            <person name="Qin X."/>
            <person name="Muzny D.M."/>
            <person name="Ayele M."/>
            <person name="Gibbs R.A."/>
            <person name="Csorgo B."/>
            <person name="Posfai G."/>
            <person name="Weinstock G.M."/>
            <person name="Blattner F.R."/>
        </authorList>
    </citation>
    <scope>NUCLEOTIDE SEQUENCE [LARGE SCALE GENOMIC DNA]</scope>
    <source>
        <strain>K12 / DH10B</strain>
    </source>
</reference>
<organism>
    <name type="scientific">Escherichia coli (strain K12 / DH10B)</name>
    <dbReference type="NCBI Taxonomy" id="316385"/>
    <lineage>
        <taxon>Bacteria</taxon>
        <taxon>Pseudomonadati</taxon>
        <taxon>Pseudomonadota</taxon>
        <taxon>Gammaproteobacteria</taxon>
        <taxon>Enterobacterales</taxon>
        <taxon>Enterobacteriaceae</taxon>
        <taxon>Escherichia</taxon>
    </lineage>
</organism>
<name>TAM_ECODH</name>
<dbReference type="EC" id="2.1.1.144" evidence="1"/>
<dbReference type="EMBL" id="CP000948">
    <property type="protein sequence ID" value="ACB02729.1"/>
    <property type="molecule type" value="Genomic_DNA"/>
</dbReference>
<dbReference type="RefSeq" id="WP_001286597.1">
    <property type="nucleotide sequence ID" value="NC_010473.1"/>
</dbReference>
<dbReference type="SMR" id="B1XEA7"/>
<dbReference type="KEGG" id="ecd:ECDH10B_1650"/>
<dbReference type="HOGENOM" id="CLU_037990_5_2_6"/>
<dbReference type="GO" id="GO:0005737">
    <property type="term" value="C:cytoplasm"/>
    <property type="evidence" value="ECO:0007669"/>
    <property type="project" value="UniProtKB-SubCell"/>
</dbReference>
<dbReference type="GO" id="GO:0030798">
    <property type="term" value="F:trans-aconitate 2-methyltransferase activity"/>
    <property type="evidence" value="ECO:0007669"/>
    <property type="project" value="UniProtKB-UniRule"/>
</dbReference>
<dbReference type="GO" id="GO:0032259">
    <property type="term" value="P:methylation"/>
    <property type="evidence" value="ECO:0007669"/>
    <property type="project" value="UniProtKB-KW"/>
</dbReference>
<dbReference type="CDD" id="cd02440">
    <property type="entry name" value="AdoMet_MTases"/>
    <property type="match status" value="1"/>
</dbReference>
<dbReference type="Gene3D" id="1.10.150.290">
    <property type="entry name" value="S-adenosyl-L-methionine-dependent methyltransferases"/>
    <property type="match status" value="1"/>
</dbReference>
<dbReference type="Gene3D" id="3.40.50.150">
    <property type="entry name" value="Vaccinia Virus protein VP39"/>
    <property type="match status" value="1"/>
</dbReference>
<dbReference type="HAMAP" id="MF_00560">
    <property type="entry name" value="Tran_acon_Me_trans"/>
    <property type="match status" value="1"/>
</dbReference>
<dbReference type="InterPro" id="IPR041698">
    <property type="entry name" value="Methyltransf_25"/>
</dbReference>
<dbReference type="InterPro" id="IPR029063">
    <property type="entry name" value="SAM-dependent_MTases_sf"/>
</dbReference>
<dbReference type="InterPro" id="IPR023506">
    <property type="entry name" value="Trans-aconitate_MeTrfase"/>
</dbReference>
<dbReference type="InterPro" id="IPR023149">
    <property type="entry name" value="Trans_acon_MeTrfase_C"/>
</dbReference>
<dbReference type="NCBIfam" id="NF002463">
    <property type="entry name" value="PRK01683.1"/>
    <property type="match status" value="1"/>
</dbReference>
<dbReference type="PANTHER" id="PTHR43861:SF1">
    <property type="entry name" value="TRANS-ACONITATE 2-METHYLTRANSFERASE"/>
    <property type="match status" value="1"/>
</dbReference>
<dbReference type="PANTHER" id="PTHR43861">
    <property type="entry name" value="TRANS-ACONITATE 2-METHYLTRANSFERASE-RELATED"/>
    <property type="match status" value="1"/>
</dbReference>
<dbReference type="Pfam" id="PF13649">
    <property type="entry name" value="Methyltransf_25"/>
    <property type="match status" value="1"/>
</dbReference>
<dbReference type="SUPFAM" id="SSF53335">
    <property type="entry name" value="S-adenosyl-L-methionine-dependent methyltransferases"/>
    <property type="match status" value="1"/>
</dbReference>
<gene>
    <name evidence="1" type="primary">tam</name>
    <name type="ordered locus">ECDH10B_1650</name>
</gene>
<evidence type="ECO:0000255" key="1">
    <source>
        <dbReference type="HAMAP-Rule" id="MF_00560"/>
    </source>
</evidence>
<comment type="function">
    <text evidence="1">Catalyzes the S-adenosylmethionine monomethyl esterification of trans-aconitate.</text>
</comment>
<comment type="catalytic activity">
    <reaction evidence="1">
        <text>trans-aconitate + S-adenosyl-L-methionine = (E)-3-(methoxycarbonyl)pent-2-enedioate + S-adenosyl-L-homocysteine</text>
        <dbReference type="Rhea" id="RHEA:14969"/>
        <dbReference type="ChEBI" id="CHEBI:15708"/>
        <dbReference type="ChEBI" id="CHEBI:57470"/>
        <dbReference type="ChEBI" id="CHEBI:57856"/>
        <dbReference type="ChEBI" id="CHEBI:59789"/>
        <dbReference type="EC" id="2.1.1.144"/>
    </reaction>
</comment>
<comment type="subcellular location">
    <subcellularLocation>
        <location evidence="1">Cytoplasm</location>
    </subcellularLocation>
</comment>
<comment type="similarity">
    <text evidence="1">Belongs to the methyltransferase superfamily. Tam family.</text>
</comment>
<keyword id="KW-0963">Cytoplasm</keyword>
<keyword id="KW-0489">Methyltransferase</keyword>
<keyword id="KW-0949">S-adenosyl-L-methionine</keyword>
<keyword id="KW-0808">Transferase</keyword>